<reference key="1">
    <citation type="journal article" date="2004" name="Proc. Natl. Acad. Sci. U.S.A.">
        <title>Complete genomes of two clinical Staphylococcus aureus strains: evidence for the rapid evolution of virulence and drug resistance.</title>
        <authorList>
            <person name="Holden M.T.G."/>
            <person name="Feil E.J."/>
            <person name="Lindsay J.A."/>
            <person name="Peacock S.J."/>
            <person name="Day N.P.J."/>
            <person name="Enright M.C."/>
            <person name="Foster T.J."/>
            <person name="Moore C.E."/>
            <person name="Hurst L."/>
            <person name="Atkin R."/>
            <person name="Barron A."/>
            <person name="Bason N."/>
            <person name="Bentley S.D."/>
            <person name="Chillingworth C."/>
            <person name="Chillingworth T."/>
            <person name="Churcher C."/>
            <person name="Clark L."/>
            <person name="Corton C."/>
            <person name="Cronin A."/>
            <person name="Doggett J."/>
            <person name="Dowd L."/>
            <person name="Feltwell T."/>
            <person name="Hance Z."/>
            <person name="Harris B."/>
            <person name="Hauser H."/>
            <person name="Holroyd S."/>
            <person name="Jagels K."/>
            <person name="James K.D."/>
            <person name="Lennard N."/>
            <person name="Line A."/>
            <person name="Mayes R."/>
            <person name="Moule S."/>
            <person name="Mungall K."/>
            <person name="Ormond D."/>
            <person name="Quail M.A."/>
            <person name="Rabbinowitsch E."/>
            <person name="Rutherford K.M."/>
            <person name="Sanders M."/>
            <person name="Sharp S."/>
            <person name="Simmonds M."/>
            <person name="Stevens K."/>
            <person name="Whitehead S."/>
            <person name="Barrell B.G."/>
            <person name="Spratt B.G."/>
            <person name="Parkhill J."/>
        </authorList>
    </citation>
    <scope>NUCLEOTIDE SEQUENCE [LARGE SCALE GENOMIC DNA]</scope>
    <source>
        <strain>MSSA476</strain>
    </source>
</reference>
<organism>
    <name type="scientific">Staphylococcus aureus (strain MSSA476)</name>
    <dbReference type="NCBI Taxonomy" id="282459"/>
    <lineage>
        <taxon>Bacteria</taxon>
        <taxon>Bacillati</taxon>
        <taxon>Bacillota</taxon>
        <taxon>Bacilli</taxon>
        <taxon>Bacillales</taxon>
        <taxon>Staphylococcaceae</taxon>
        <taxon>Staphylococcus</taxon>
    </lineage>
</organism>
<gene>
    <name evidence="1" type="primary">gatC</name>
    <name type="ordered locus">SAS1824</name>
</gene>
<sequence length="100" mass="11268">MTKVTREEVEHIANLARLQISPEETEEMANTLESILDFAKQNDSADTEGVEPTYHVLDLQNVLREDKAIKGIPQELALKNAKETEDGQFKVPTIMNEEDA</sequence>
<name>GATC_STAAS</name>
<accession>Q6G832</accession>
<feature type="chain" id="PRO_0000105333" description="Aspartyl/glutamyl-tRNA(Asn/Gln) amidotransferase subunit C">
    <location>
        <begin position="1"/>
        <end position="100"/>
    </location>
</feature>
<protein>
    <recommendedName>
        <fullName evidence="1">Aspartyl/glutamyl-tRNA(Asn/Gln) amidotransferase subunit C</fullName>
        <shortName evidence="1">Asp/Glu-ADT subunit C</shortName>
        <ecNumber evidence="1">6.3.5.-</ecNumber>
    </recommendedName>
</protein>
<proteinExistence type="inferred from homology"/>
<dbReference type="EC" id="6.3.5.-" evidence="1"/>
<dbReference type="EMBL" id="BX571857">
    <property type="protein sequence ID" value="CAG43629.1"/>
    <property type="molecule type" value="Genomic_DNA"/>
</dbReference>
<dbReference type="RefSeq" id="WP_000170162.1">
    <property type="nucleotide sequence ID" value="NC_002953.3"/>
</dbReference>
<dbReference type="SMR" id="Q6G832"/>
<dbReference type="GeneID" id="98346286"/>
<dbReference type="KEGG" id="sas:SAS1824"/>
<dbReference type="HOGENOM" id="CLU_105899_1_2_9"/>
<dbReference type="GO" id="GO:0050566">
    <property type="term" value="F:asparaginyl-tRNA synthase (glutamine-hydrolyzing) activity"/>
    <property type="evidence" value="ECO:0007669"/>
    <property type="project" value="RHEA"/>
</dbReference>
<dbReference type="GO" id="GO:0005524">
    <property type="term" value="F:ATP binding"/>
    <property type="evidence" value="ECO:0007669"/>
    <property type="project" value="UniProtKB-KW"/>
</dbReference>
<dbReference type="GO" id="GO:0050567">
    <property type="term" value="F:glutaminyl-tRNA synthase (glutamine-hydrolyzing) activity"/>
    <property type="evidence" value="ECO:0007669"/>
    <property type="project" value="UniProtKB-UniRule"/>
</dbReference>
<dbReference type="GO" id="GO:0070681">
    <property type="term" value="P:glutaminyl-tRNAGln biosynthesis via transamidation"/>
    <property type="evidence" value="ECO:0007669"/>
    <property type="project" value="TreeGrafter"/>
</dbReference>
<dbReference type="GO" id="GO:0006450">
    <property type="term" value="P:regulation of translational fidelity"/>
    <property type="evidence" value="ECO:0007669"/>
    <property type="project" value="InterPro"/>
</dbReference>
<dbReference type="GO" id="GO:0006412">
    <property type="term" value="P:translation"/>
    <property type="evidence" value="ECO:0007669"/>
    <property type="project" value="UniProtKB-UniRule"/>
</dbReference>
<dbReference type="Gene3D" id="1.10.20.60">
    <property type="entry name" value="Glu-tRNAGln amidotransferase C subunit, N-terminal domain"/>
    <property type="match status" value="1"/>
</dbReference>
<dbReference type="HAMAP" id="MF_00122">
    <property type="entry name" value="GatC"/>
    <property type="match status" value="1"/>
</dbReference>
<dbReference type="InterPro" id="IPR036113">
    <property type="entry name" value="Asp/Glu-ADT_sf_sub_c"/>
</dbReference>
<dbReference type="InterPro" id="IPR003837">
    <property type="entry name" value="GatC"/>
</dbReference>
<dbReference type="NCBIfam" id="TIGR00135">
    <property type="entry name" value="gatC"/>
    <property type="match status" value="1"/>
</dbReference>
<dbReference type="PANTHER" id="PTHR15004">
    <property type="entry name" value="GLUTAMYL-TRNA(GLN) AMIDOTRANSFERASE SUBUNIT C, MITOCHONDRIAL"/>
    <property type="match status" value="1"/>
</dbReference>
<dbReference type="PANTHER" id="PTHR15004:SF0">
    <property type="entry name" value="GLUTAMYL-TRNA(GLN) AMIDOTRANSFERASE SUBUNIT C, MITOCHONDRIAL"/>
    <property type="match status" value="1"/>
</dbReference>
<dbReference type="Pfam" id="PF02686">
    <property type="entry name" value="GatC"/>
    <property type="match status" value="1"/>
</dbReference>
<dbReference type="SUPFAM" id="SSF141000">
    <property type="entry name" value="Glu-tRNAGln amidotransferase C subunit"/>
    <property type="match status" value="1"/>
</dbReference>
<evidence type="ECO:0000255" key="1">
    <source>
        <dbReference type="HAMAP-Rule" id="MF_00122"/>
    </source>
</evidence>
<keyword id="KW-0067">ATP-binding</keyword>
<keyword id="KW-0436">Ligase</keyword>
<keyword id="KW-0547">Nucleotide-binding</keyword>
<keyword id="KW-0648">Protein biosynthesis</keyword>
<comment type="function">
    <text evidence="1">Allows the formation of correctly charged Asn-tRNA(Asn) or Gln-tRNA(Gln) through the transamidation of misacylated Asp-tRNA(Asn) or Glu-tRNA(Gln) in organisms which lack either or both of asparaginyl-tRNA or glutaminyl-tRNA synthetases. The reaction takes place in the presence of glutamine and ATP through an activated phospho-Asp-tRNA(Asn) or phospho-Glu-tRNA(Gln).</text>
</comment>
<comment type="catalytic activity">
    <reaction evidence="1">
        <text>L-glutamyl-tRNA(Gln) + L-glutamine + ATP + H2O = L-glutaminyl-tRNA(Gln) + L-glutamate + ADP + phosphate + H(+)</text>
        <dbReference type="Rhea" id="RHEA:17521"/>
        <dbReference type="Rhea" id="RHEA-COMP:9681"/>
        <dbReference type="Rhea" id="RHEA-COMP:9684"/>
        <dbReference type="ChEBI" id="CHEBI:15377"/>
        <dbReference type="ChEBI" id="CHEBI:15378"/>
        <dbReference type="ChEBI" id="CHEBI:29985"/>
        <dbReference type="ChEBI" id="CHEBI:30616"/>
        <dbReference type="ChEBI" id="CHEBI:43474"/>
        <dbReference type="ChEBI" id="CHEBI:58359"/>
        <dbReference type="ChEBI" id="CHEBI:78520"/>
        <dbReference type="ChEBI" id="CHEBI:78521"/>
        <dbReference type="ChEBI" id="CHEBI:456216"/>
    </reaction>
</comment>
<comment type="catalytic activity">
    <reaction evidence="1">
        <text>L-aspartyl-tRNA(Asn) + L-glutamine + ATP + H2O = L-asparaginyl-tRNA(Asn) + L-glutamate + ADP + phosphate + 2 H(+)</text>
        <dbReference type="Rhea" id="RHEA:14513"/>
        <dbReference type="Rhea" id="RHEA-COMP:9674"/>
        <dbReference type="Rhea" id="RHEA-COMP:9677"/>
        <dbReference type="ChEBI" id="CHEBI:15377"/>
        <dbReference type="ChEBI" id="CHEBI:15378"/>
        <dbReference type="ChEBI" id="CHEBI:29985"/>
        <dbReference type="ChEBI" id="CHEBI:30616"/>
        <dbReference type="ChEBI" id="CHEBI:43474"/>
        <dbReference type="ChEBI" id="CHEBI:58359"/>
        <dbReference type="ChEBI" id="CHEBI:78515"/>
        <dbReference type="ChEBI" id="CHEBI:78516"/>
        <dbReference type="ChEBI" id="CHEBI:456216"/>
    </reaction>
</comment>
<comment type="subunit">
    <text evidence="1">Heterotrimer of A, B and C subunits.</text>
</comment>
<comment type="similarity">
    <text evidence="1">Belongs to the GatC family.</text>
</comment>